<keyword id="KW-0150">Chloroplast</keyword>
<keyword id="KW-0934">Plastid</keyword>
<keyword id="KW-0687">Ribonucleoprotein</keyword>
<keyword id="KW-0689">Ribosomal protein</keyword>
<keyword id="KW-0694">RNA-binding</keyword>
<keyword id="KW-0699">rRNA-binding</keyword>
<geneLocation type="chloroplast"/>
<comment type="function">
    <text evidence="1">One of the primary rRNA binding proteins, it binds directly to 16S rRNA central domain where it helps coordinate assembly of the platform of the 30S subunit.</text>
</comment>
<comment type="subunit">
    <text evidence="1">Part of the 30S ribosomal subunit.</text>
</comment>
<comment type="subcellular location">
    <subcellularLocation>
        <location>Plastid</location>
        <location>Chloroplast</location>
    </subcellularLocation>
</comment>
<comment type="similarity">
    <text evidence="2">Belongs to the universal ribosomal protein uS8 family.</text>
</comment>
<evidence type="ECO:0000250" key="1"/>
<evidence type="ECO:0000305" key="2"/>
<accession>Q7YJU3</accession>
<name>RR8_CALFG</name>
<gene>
    <name type="primary">rps8</name>
</gene>
<protein>
    <recommendedName>
        <fullName evidence="2">Small ribosomal subunit protein uS8c</fullName>
    </recommendedName>
    <alternativeName>
        <fullName>30S ribosomal protein S8, chloroplastic</fullName>
    </alternativeName>
</protein>
<dbReference type="EMBL" id="AJ428413">
    <property type="protein sequence ID" value="CAD28756.1"/>
    <property type="molecule type" value="Genomic_DNA"/>
</dbReference>
<dbReference type="RefSeq" id="NP_862789.1">
    <property type="nucleotide sequence ID" value="NC_004993.1"/>
</dbReference>
<dbReference type="SMR" id="Q7YJU3"/>
<dbReference type="GeneID" id="2598048"/>
<dbReference type="GO" id="GO:0009507">
    <property type="term" value="C:chloroplast"/>
    <property type="evidence" value="ECO:0007669"/>
    <property type="project" value="UniProtKB-SubCell"/>
</dbReference>
<dbReference type="GO" id="GO:1990904">
    <property type="term" value="C:ribonucleoprotein complex"/>
    <property type="evidence" value="ECO:0007669"/>
    <property type="project" value="UniProtKB-KW"/>
</dbReference>
<dbReference type="GO" id="GO:0005840">
    <property type="term" value="C:ribosome"/>
    <property type="evidence" value="ECO:0007669"/>
    <property type="project" value="UniProtKB-KW"/>
</dbReference>
<dbReference type="GO" id="GO:0019843">
    <property type="term" value="F:rRNA binding"/>
    <property type="evidence" value="ECO:0007669"/>
    <property type="project" value="UniProtKB-UniRule"/>
</dbReference>
<dbReference type="GO" id="GO:0003735">
    <property type="term" value="F:structural constituent of ribosome"/>
    <property type="evidence" value="ECO:0007669"/>
    <property type="project" value="InterPro"/>
</dbReference>
<dbReference type="GO" id="GO:0006412">
    <property type="term" value="P:translation"/>
    <property type="evidence" value="ECO:0007669"/>
    <property type="project" value="UniProtKB-UniRule"/>
</dbReference>
<dbReference type="FunFam" id="3.30.1490.10:FF:000001">
    <property type="entry name" value="30S ribosomal protein S8"/>
    <property type="match status" value="1"/>
</dbReference>
<dbReference type="FunFam" id="3.30.1370.30:FF:000004">
    <property type="entry name" value="30S ribosomal protein S8, chloroplastic"/>
    <property type="match status" value="1"/>
</dbReference>
<dbReference type="Gene3D" id="3.30.1370.30">
    <property type="match status" value="1"/>
</dbReference>
<dbReference type="Gene3D" id="3.30.1490.10">
    <property type="match status" value="1"/>
</dbReference>
<dbReference type="HAMAP" id="MF_01302_B">
    <property type="entry name" value="Ribosomal_uS8_B"/>
    <property type="match status" value="1"/>
</dbReference>
<dbReference type="InterPro" id="IPR000630">
    <property type="entry name" value="Ribosomal_uS8"/>
</dbReference>
<dbReference type="InterPro" id="IPR047863">
    <property type="entry name" value="Ribosomal_uS8_CS"/>
</dbReference>
<dbReference type="InterPro" id="IPR035987">
    <property type="entry name" value="Ribosomal_uS8_sf"/>
</dbReference>
<dbReference type="NCBIfam" id="NF001109">
    <property type="entry name" value="PRK00136.1"/>
    <property type="match status" value="1"/>
</dbReference>
<dbReference type="PANTHER" id="PTHR11758">
    <property type="entry name" value="40S RIBOSOMAL PROTEIN S15A"/>
    <property type="match status" value="1"/>
</dbReference>
<dbReference type="Pfam" id="PF00410">
    <property type="entry name" value="Ribosomal_S8"/>
    <property type="match status" value="1"/>
</dbReference>
<dbReference type="SUPFAM" id="SSF56047">
    <property type="entry name" value="Ribosomal protein S8"/>
    <property type="match status" value="1"/>
</dbReference>
<dbReference type="PROSITE" id="PS00053">
    <property type="entry name" value="RIBOSOMAL_S8"/>
    <property type="match status" value="1"/>
</dbReference>
<proteinExistence type="inferred from homology"/>
<feature type="chain" id="PRO_0000126564" description="Small ribosomal subunit protein uS8c">
    <location>
        <begin position="1"/>
        <end position="132"/>
    </location>
</feature>
<reference key="1">
    <citation type="journal article" date="2003" name="Plant Syst. Evol.">
        <title>The chloroplast genome of the 'basal' angiosperm Calycanthus fertilis -- structural and phylogenetic analyses.</title>
        <authorList>
            <person name="Goremykin V."/>
            <person name="Hirsch-Ernst K.I."/>
            <person name="Woelfl S."/>
            <person name="Hellwig F.H."/>
        </authorList>
    </citation>
    <scope>NUCLEOTIDE SEQUENCE [LARGE SCALE GENOMIC DNA]</scope>
</reference>
<sequence length="132" mass="15246">MGRDTIADILTSIRNANMDKKGTVRIASTNITENIVKILLREGFIENVRKHQENNKYFLVSTLQHRRNRKGRYRTILKRISRPGLRIYSNYQRIPRILGGMGIVILSTSQGIMTDREARLEGIGGEILCYIW</sequence>
<organism>
    <name type="scientific">Calycanthus floridus var. glaucus</name>
    <name type="common">Eastern sweetshrub</name>
    <name type="synonym">Calycanthus fertilis var. ferax</name>
    <dbReference type="NCBI Taxonomy" id="212734"/>
    <lineage>
        <taxon>Eukaryota</taxon>
        <taxon>Viridiplantae</taxon>
        <taxon>Streptophyta</taxon>
        <taxon>Embryophyta</taxon>
        <taxon>Tracheophyta</taxon>
        <taxon>Spermatophyta</taxon>
        <taxon>Magnoliopsida</taxon>
        <taxon>Magnoliidae</taxon>
        <taxon>Laurales</taxon>
        <taxon>Calycanthaceae</taxon>
        <taxon>Calycanthus</taxon>
    </lineage>
</organism>